<keyword id="KW-0002">3D-structure</keyword>
<keyword id="KW-0469">Meiosis</keyword>
<keyword id="KW-0539">Nucleus</keyword>
<keyword id="KW-1185">Reference proteome</keyword>
<dbReference type="EMBL" id="M74045">
    <property type="protein sequence ID" value="AAA34964.1"/>
    <property type="status" value="ALT_SEQ"/>
    <property type="molecule type" value="Genomic_DNA"/>
</dbReference>
<dbReference type="EMBL" id="U20618">
    <property type="protein sequence ID" value="AAB64525.1"/>
    <property type="status" value="ALT_SEQ"/>
    <property type="molecule type" value="Genomic_DNA"/>
</dbReference>
<dbReference type="EMBL" id="AY558220">
    <property type="protein sequence ID" value="AAS56546.1"/>
    <property type="molecule type" value="Genomic_DNA"/>
</dbReference>
<dbReference type="EMBL" id="BK006945">
    <property type="protein sequence ID" value="DAA09637.1"/>
    <property type="molecule type" value="Genomic_DNA"/>
</dbReference>
<dbReference type="PIR" id="S20118">
    <property type="entry name" value="S20118"/>
</dbReference>
<dbReference type="RefSeq" id="NP_013433.2">
    <property type="nucleotide sequence ID" value="NM_001182218.1"/>
</dbReference>
<dbReference type="PDB" id="8URQ">
    <property type="method" value="EM"/>
    <property type="resolution" value="3.30 A"/>
    <property type="chains" value="B=1-264"/>
</dbReference>
<dbReference type="PDB" id="8URU">
    <property type="method" value="EM"/>
    <property type="resolution" value="3.70 A"/>
    <property type="chains" value="B=1-264"/>
</dbReference>
<dbReference type="PDBsum" id="8URQ"/>
<dbReference type="PDBsum" id="8URU"/>
<dbReference type="EMDB" id="EMD-42497"/>
<dbReference type="EMDB" id="EMD-42501"/>
<dbReference type="SMR" id="Q02721"/>
<dbReference type="BioGRID" id="31593">
    <property type="interactions" value="77"/>
</dbReference>
<dbReference type="ComplexPortal" id="CPX-1292">
    <property type="entry name" value="REC102-REC104 meiotic recombination initiation complex"/>
</dbReference>
<dbReference type="DIP" id="DIP-4675N"/>
<dbReference type="FunCoup" id="Q02721">
    <property type="interactions" value="34"/>
</dbReference>
<dbReference type="IntAct" id="Q02721">
    <property type="interactions" value="7"/>
</dbReference>
<dbReference type="STRING" id="4932.YLR329W"/>
<dbReference type="PaxDb" id="4932-YLR329W"/>
<dbReference type="PeptideAtlas" id="Q02721"/>
<dbReference type="EnsemblFungi" id="YLR329W_mRNA">
    <property type="protein sequence ID" value="YLR329W"/>
    <property type="gene ID" value="YLR329W"/>
</dbReference>
<dbReference type="GeneID" id="851040"/>
<dbReference type="KEGG" id="sce:YLR329W"/>
<dbReference type="AGR" id="SGD:S000004321"/>
<dbReference type="SGD" id="S000004321">
    <property type="gene designation" value="REC102"/>
</dbReference>
<dbReference type="VEuPathDB" id="FungiDB:YLR329W"/>
<dbReference type="eggNOG" id="ENOG502S4ZG">
    <property type="taxonomic scope" value="Eukaryota"/>
</dbReference>
<dbReference type="HOGENOM" id="CLU_094693_0_0_1"/>
<dbReference type="InParanoid" id="Q02721"/>
<dbReference type="OMA" id="HTHAKGY"/>
<dbReference type="OrthoDB" id="4060534at2759"/>
<dbReference type="BioCyc" id="YEAST:G3O-32411-MONOMER"/>
<dbReference type="BioGRID-ORCS" id="851040">
    <property type="hits" value="0 hits in 10 CRISPR screens"/>
</dbReference>
<dbReference type="PRO" id="PR:Q02721"/>
<dbReference type="Proteomes" id="UP000002311">
    <property type="component" value="Chromosome XII"/>
</dbReference>
<dbReference type="RNAct" id="Q02721">
    <property type="molecule type" value="protein"/>
</dbReference>
<dbReference type="GO" id="GO:0000794">
    <property type="term" value="C:condensed nuclear chromosome"/>
    <property type="evidence" value="ECO:0000314"/>
    <property type="project" value="ComplexPortal"/>
</dbReference>
<dbReference type="GO" id="GO:0042138">
    <property type="term" value="P:meiotic DNA double-strand break formation"/>
    <property type="evidence" value="ECO:0000314"/>
    <property type="project" value="ComplexPortal"/>
</dbReference>
<dbReference type="GO" id="GO:0007131">
    <property type="term" value="P:reciprocal meiotic recombination"/>
    <property type="evidence" value="ECO:0000315"/>
    <property type="project" value="SGD"/>
</dbReference>
<dbReference type="InterPro" id="IPR048920">
    <property type="entry name" value="REC102"/>
</dbReference>
<dbReference type="Pfam" id="PF21736">
    <property type="entry name" value="REC102"/>
    <property type="match status" value="1"/>
</dbReference>
<feature type="chain" id="PRO_0000097213" description="Meiotic recombination protein REC102">
    <location>
        <begin position="1"/>
        <end position="264"/>
    </location>
</feature>
<feature type="strand" evidence="15">
    <location>
        <begin position="46"/>
        <end position="52"/>
    </location>
</feature>
<feature type="strand" evidence="15">
    <location>
        <begin position="57"/>
        <end position="60"/>
    </location>
</feature>
<feature type="helix" evidence="15">
    <location>
        <begin position="76"/>
        <end position="85"/>
    </location>
</feature>
<feature type="helix" evidence="15">
    <location>
        <begin position="88"/>
        <end position="93"/>
    </location>
</feature>
<feature type="strand" evidence="15">
    <location>
        <begin position="97"/>
        <end position="99"/>
    </location>
</feature>
<feature type="strand" evidence="15">
    <location>
        <begin position="111"/>
        <end position="118"/>
    </location>
</feature>
<feature type="helix" evidence="15">
    <location>
        <begin position="120"/>
        <end position="133"/>
    </location>
</feature>
<feature type="strand" evidence="15">
    <location>
        <begin position="142"/>
        <end position="150"/>
    </location>
</feature>
<feature type="strand" evidence="15">
    <location>
        <begin position="158"/>
        <end position="161"/>
    </location>
</feature>
<feature type="helix" evidence="15">
    <location>
        <begin position="169"/>
        <end position="172"/>
    </location>
</feature>
<feature type="strand" evidence="15">
    <location>
        <begin position="173"/>
        <end position="175"/>
    </location>
</feature>
<feature type="helix" evidence="15">
    <location>
        <begin position="178"/>
        <end position="182"/>
    </location>
</feature>
<feature type="turn" evidence="15">
    <location>
        <begin position="183"/>
        <end position="186"/>
    </location>
</feature>
<feature type="turn" evidence="15">
    <location>
        <begin position="189"/>
        <end position="191"/>
    </location>
</feature>
<feature type="helix" evidence="15">
    <location>
        <begin position="194"/>
        <end position="203"/>
    </location>
</feature>
<feature type="helix" evidence="15">
    <location>
        <begin position="205"/>
        <end position="207"/>
    </location>
</feature>
<feature type="helix" evidence="15">
    <location>
        <begin position="209"/>
        <end position="212"/>
    </location>
</feature>
<feature type="strand" evidence="15">
    <location>
        <begin position="215"/>
        <end position="218"/>
    </location>
</feature>
<feature type="helix" evidence="15">
    <location>
        <begin position="221"/>
        <end position="230"/>
    </location>
</feature>
<feature type="helix" evidence="15">
    <location>
        <begin position="237"/>
        <end position="240"/>
    </location>
</feature>
<sequence>MARDITFLTVFLESCGAVNNDEAGKLLSAWTSTVRIEGPESTDSNSLYIPLLPPGMLKIKLNFKMNDRLVTEEQELFTKLREIVGSSIRFWEEQLFYQVQDVSTIENHVILSLKCTILTDAQISTFISKPRELHTHAKGYPEIYYLSELSTTVNFFSKEGNYVEISQVIPHFNEYFSSLIVSQLEFEYPMVFSMISRLRLKWQQSSLAPISYALTSNSVLLPIMLNMIAQDKSSTTAYQILCRRRGPPIQNFQIFSLPAVTYNK</sequence>
<evidence type="ECO:0000269" key="1">
    <source>
    </source>
</evidence>
<evidence type="ECO:0000269" key="2">
    <source>
    </source>
</evidence>
<evidence type="ECO:0000269" key="3">
    <source>
    </source>
</evidence>
<evidence type="ECO:0000269" key="4">
    <source>
    </source>
</evidence>
<evidence type="ECO:0000269" key="5">
    <source>
    </source>
</evidence>
<evidence type="ECO:0000269" key="6">
    <source>
    </source>
</evidence>
<evidence type="ECO:0000269" key="7">
    <source>
    </source>
</evidence>
<evidence type="ECO:0000269" key="8">
    <source>
    </source>
</evidence>
<evidence type="ECO:0000269" key="9">
    <source>
    </source>
</evidence>
<evidence type="ECO:0000269" key="10">
    <source>
    </source>
</evidence>
<evidence type="ECO:0000303" key="11">
    <source>
    </source>
</evidence>
<evidence type="ECO:0000305" key="12"/>
<evidence type="ECO:0000305" key="13">
    <source>
    </source>
</evidence>
<evidence type="ECO:0000312" key="14">
    <source>
        <dbReference type="SGD" id="S000004321"/>
    </source>
</evidence>
<evidence type="ECO:0007829" key="15">
    <source>
        <dbReference type="PDB" id="8URQ"/>
    </source>
</evidence>
<comment type="function">
    <text evidence="1 2 5 7 8">Required for formation of the SPO11-mediated double-strand breaks (DSBs) that initiate meiotic recombination. May mediate the interaction between SPO11 subunits during meiosis. Also needed for homolog chromosome pairing, synaptonemal complex formation, and for the proper timing of the first meiotic division. Not required for mitosis and mitotic DNA repair mechanisms.</text>
</comment>
<comment type="subunit">
    <text evidence="2 3 4 9">Interacts with REC104; seems to form a functional unit with REC104. REC102-REC104 interacts with SKI8-SPO11 and this interaction is required for proper subcellular location of the proteins during the initiation of recombination. Interacts with MEI4, REC114 and SPO11.</text>
</comment>
<comment type="interaction">
    <interactant intactId="EBI-14432">
        <id>Q02721</id>
    </interactant>
    <interactant intactId="EBI-16412992">
        <id>P33323</id>
        <label>REC104</label>
    </interactant>
    <organismsDiffer>false</organismsDiffer>
    <experiments>6</experiments>
</comment>
<comment type="subcellular location">
    <subcellularLocation>
        <location evidence="2 4">Nucleus</location>
    </subcellularLocation>
    <text>Associates with chromatin during prophase. Recruitment to chromatin depends on REC104, SPO11 and SKI8.</text>
</comment>
<comment type="developmental stage">
    <text evidence="6">Meiosis-specific. mRNA is spliced only during meiosis.</text>
</comment>
<comment type="disruption phenotype">
    <text evidence="10">Reduces meiotic recombination several hundred fold. Specifically affects meiosis, and does not have any detectable mitotic phenotype.</text>
</comment>
<comment type="miscellaneous">
    <text evidence="13">Despite weak sequence similarities, may correspond to the subunit B of a SPO11-containing topoisomerase 6 complex specifically required for meiotic recombination. Retains some of the structural features of the ancestral archaeal Top6B subunit (AC O05207).</text>
</comment>
<comment type="similarity">
    <text evidence="12">Belongs to the TOP6B-like family.</text>
</comment>
<comment type="sequence caution" evidence="12">
    <conflict type="erroneous gene model prediction">
        <sequence resource="EMBL-CDS" id="AAA34964"/>
    </conflict>
</comment>
<comment type="sequence caution" evidence="12">
    <conflict type="erroneous gene model prediction">
        <sequence resource="EMBL-CDS" id="AAB64525"/>
    </conflict>
</comment>
<proteinExistence type="evidence at protein level"/>
<gene>
    <name evidence="11" type="primary">REC102</name>
    <name evidence="14" type="ordered locus">YLR329W</name>
    <name type="ORF">L8543.17</name>
</gene>
<protein>
    <recommendedName>
        <fullName>Meiotic recombination protein REC102</fullName>
    </recommendedName>
</protein>
<name>TO6BL_YEAST</name>
<organism>
    <name type="scientific">Saccharomyces cerevisiae (strain ATCC 204508 / S288c)</name>
    <name type="common">Baker's yeast</name>
    <dbReference type="NCBI Taxonomy" id="559292"/>
    <lineage>
        <taxon>Eukaryota</taxon>
        <taxon>Fungi</taxon>
        <taxon>Dikarya</taxon>
        <taxon>Ascomycota</taxon>
        <taxon>Saccharomycotina</taxon>
        <taxon>Saccharomycetes</taxon>
        <taxon>Saccharomycetales</taxon>
        <taxon>Saccharomycetaceae</taxon>
        <taxon>Saccharomyces</taxon>
    </lineage>
</organism>
<accession>Q02721</accession>
<accession>D6VYX1</accession>
<reference key="1">
    <citation type="journal article" date="1992" name="Mol. Cell. Biol.">
        <title>Molecular and genetic analysis of the yeast early meiotic recombination genes REC102 and REC107/MER2.</title>
        <authorList>
            <person name="Cool M."/>
            <person name="Malone R.E."/>
        </authorList>
    </citation>
    <scope>NUCLEOTIDE SEQUENCE [GENOMIC DNA]</scope>
</reference>
<reference key="2">
    <citation type="journal article" date="1997" name="Nature">
        <title>The nucleotide sequence of Saccharomyces cerevisiae chromosome XII.</title>
        <authorList>
            <person name="Johnston M."/>
            <person name="Hillier L.W."/>
            <person name="Riles L."/>
            <person name="Albermann K."/>
            <person name="Andre B."/>
            <person name="Ansorge W."/>
            <person name="Benes V."/>
            <person name="Brueckner M."/>
            <person name="Delius H."/>
            <person name="Dubois E."/>
            <person name="Duesterhoeft A."/>
            <person name="Entian K.-D."/>
            <person name="Floeth M."/>
            <person name="Goffeau A."/>
            <person name="Hebling U."/>
            <person name="Heumann K."/>
            <person name="Heuss-Neitzel D."/>
            <person name="Hilbert H."/>
            <person name="Hilger F."/>
            <person name="Kleine K."/>
            <person name="Koetter P."/>
            <person name="Louis E.J."/>
            <person name="Messenguy F."/>
            <person name="Mewes H.-W."/>
            <person name="Miosga T."/>
            <person name="Moestl D."/>
            <person name="Mueller-Auer S."/>
            <person name="Nentwich U."/>
            <person name="Obermaier B."/>
            <person name="Piravandi E."/>
            <person name="Pohl T.M."/>
            <person name="Portetelle D."/>
            <person name="Purnelle B."/>
            <person name="Rechmann S."/>
            <person name="Rieger M."/>
            <person name="Rinke M."/>
            <person name="Rose M."/>
            <person name="Scharfe M."/>
            <person name="Scherens B."/>
            <person name="Scholler P."/>
            <person name="Schwager C."/>
            <person name="Schwarz S."/>
            <person name="Underwood A.P."/>
            <person name="Urrestarazu L.A."/>
            <person name="Vandenbol M."/>
            <person name="Verhasselt P."/>
            <person name="Vierendeels F."/>
            <person name="Voet M."/>
            <person name="Volckaert G."/>
            <person name="Voss H."/>
            <person name="Wambutt R."/>
            <person name="Wedler E."/>
            <person name="Wedler H."/>
            <person name="Zimmermann F.K."/>
            <person name="Zollner A."/>
            <person name="Hani J."/>
            <person name="Hoheisel J.D."/>
        </authorList>
    </citation>
    <scope>NUCLEOTIDE SEQUENCE [LARGE SCALE GENOMIC DNA]</scope>
    <source>
        <strain>ATCC 204508 / S288c</strain>
    </source>
</reference>
<reference key="3">
    <citation type="journal article" date="2014" name="G3 (Bethesda)">
        <title>The reference genome sequence of Saccharomyces cerevisiae: Then and now.</title>
        <authorList>
            <person name="Engel S.R."/>
            <person name="Dietrich F.S."/>
            <person name="Fisk D.G."/>
            <person name="Binkley G."/>
            <person name="Balakrishnan R."/>
            <person name="Costanzo M.C."/>
            <person name="Dwight S.S."/>
            <person name="Hitz B.C."/>
            <person name="Karra K."/>
            <person name="Nash R.S."/>
            <person name="Weng S."/>
            <person name="Wong E.D."/>
            <person name="Lloyd P."/>
            <person name="Skrzypek M.S."/>
            <person name="Miyasato S.R."/>
            <person name="Simison M."/>
            <person name="Cherry J.M."/>
        </authorList>
    </citation>
    <scope>GENOME REANNOTATION</scope>
    <source>
        <strain>ATCC 204508 / S288c</strain>
    </source>
</reference>
<reference key="4">
    <citation type="journal article" date="2007" name="Genome Res.">
        <title>Approaching a complete repository of sequence-verified protein-encoding clones for Saccharomyces cerevisiae.</title>
        <authorList>
            <person name="Hu Y."/>
            <person name="Rolfs A."/>
            <person name="Bhullar B."/>
            <person name="Murthy T.V.S."/>
            <person name="Zhu C."/>
            <person name="Berger M.F."/>
            <person name="Camargo A.A."/>
            <person name="Kelley F."/>
            <person name="McCarron S."/>
            <person name="Jepson D."/>
            <person name="Richardson A."/>
            <person name="Raphael J."/>
            <person name="Moreira D."/>
            <person name="Taycher E."/>
            <person name="Zuo D."/>
            <person name="Mohr S."/>
            <person name="Kane M.F."/>
            <person name="Williamson J."/>
            <person name="Simpson A.J.G."/>
            <person name="Bulyk M.L."/>
            <person name="Harlow E."/>
            <person name="Marsischky G."/>
            <person name="Kolodner R.D."/>
            <person name="LaBaer J."/>
        </authorList>
    </citation>
    <scope>NUCLEOTIDE SEQUENCE [GENOMIC DNA] OF 65-264</scope>
    <source>
        <strain>ATCC 204508 / S288c</strain>
    </source>
</reference>
<reference key="5">
    <citation type="journal article" date="1991" name="Genetics">
        <title>Isolation of mutants defective in early steps of meiotic recombination in the yeast Saccharomyces cerevisiae.</title>
        <authorList>
            <person name="Malone R.E."/>
            <person name="Bullard S."/>
            <person name="Hermiston M."/>
            <person name="Rieger R."/>
            <person name="Cool M."/>
            <person name="Galbraith A."/>
        </authorList>
    </citation>
    <scope>DISRUPTION PHENOTYPE</scope>
</reference>
<reference key="6">
    <citation type="journal article" date="1992" name="Genetics">
        <title>The rec102 mutant of yeast is defective in meiotic recombination and chromosome synapsis.</title>
        <authorList>
            <person name="Bhargava J."/>
            <person name="Engebrecht J."/>
            <person name="Roeder G.S."/>
        </authorList>
    </citation>
    <scope>FUNCTION</scope>
</reference>
<reference key="7">
    <citation type="journal article" date="1999" name="Genetics">
        <title>Coordination of the initiation of recombination and the reductional division in meiosis in Saccharomyces cerevisiae.</title>
        <authorList>
            <person name="Jiao K."/>
            <person name="Bullard S.A."/>
            <person name="Salem L."/>
            <person name="Malone R.E."/>
        </authorList>
    </citation>
    <scope>FUNCTION</scope>
</reference>
<reference key="8">
    <citation type="journal article" date="2002" name="Genetics">
        <title>Functional interactions between SPO11 and REC102 during initiation of meiotic recombination in Saccharomyces cerevisiae.</title>
        <authorList>
            <person name="Kee K."/>
            <person name="Keeney S."/>
        </authorList>
    </citation>
    <scope>FUNCTION</scope>
    <scope>INTERACTION WITH SPO11</scope>
    <scope>SUBCELLULAR LOCATION</scope>
</reference>
<reference key="9">
    <citation type="journal article" date="2003" name="Mol. Cell. Biol.">
        <title>Support for a meiotic recombination initiation complex: interactions among Rec102p, Rec104p, and Spo11p.</title>
        <authorList>
            <person name="Jiao K."/>
            <person name="Salem L."/>
            <person name="Malone R.E."/>
        </authorList>
    </citation>
    <scope>INTERACTION WITH REC104 AND SPO11</scope>
</reference>
<reference key="10">
    <citation type="journal article" date="2004" name="EMBO J.">
        <title>Spatial organization and dynamics of the association of Rec102 and Rec104 with meiotic chromosomes.</title>
        <authorList>
            <person name="Kee K."/>
            <person name="Protacio R.U."/>
            <person name="Arora C."/>
            <person name="Keeney S."/>
        </authorList>
    </citation>
    <scope>INTERACTION WITH REC104</scope>
    <scope>SUBCELLULAR LOCATION</scope>
</reference>
<reference key="11">
    <citation type="journal article" date="2005" name="Genes Dev.">
        <title>The control of Spo11's interaction with meiotic recombination hotspots.</title>
        <authorList>
            <person name="Prieler S."/>
            <person name="Penkner A."/>
            <person name="Borde V."/>
            <person name="Klein F."/>
        </authorList>
    </citation>
    <scope>FUNCTION</scope>
</reference>
<reference key="12">
    <citation type="journal article" date="2007" name="Chromosoma">
        <title>Interactions between Mei4, Rec114, and other proteins required for meiotic DNA double-strand break formation in Saccharomyces cerevisiae.</title>
        <authorList>
            <person name="Maleki S."/>
            <person name="Neale M.J."/>
            <person name="Arora C."/>
            <person name="Henderson K.A."/>
            <person name="Keeney S."/>
        </authorList>
    </citation>
    <scope>IDENTIFICATION OF INTRON</scope>
    <scope>INTERACTION WITH MEI4; REC104; REC114 AND SPO11</scope>
</reference>
<reference key="13">
    <citation type="journal article" date="2007" name="Nucleic Acids Res.">
        <title>Meiotic association between Spo11 regulated by Rec102, Rec104 and Rec114.</title>
        <authorList>
            <person name="Sasanuma H."/>
            <person name="Murakami H."/>
            <person name="Fukuda T."/>
            <person name="Shibata T."/>
            <person name="Nicolas A."/>
            <person name="Ohta K."/>
        </authorList>
    </citation>
    <scope>FUNCTION</scope>
</reference>
<reference key="14">
    <citation type="journal article" date="2007" name="Proc. Natl. Acad. Sci. U.S.A.">
        <title>High-density yeast-tiling array reveals previously undiscovered introns and extensive regulation of meiotic splicing.</title>
        <authorList>
            <person name="Juneau K."/>
            <person name="Palm C."/>
            <person name="Miranda M."/>
            <person name="Davis R.W."/>
        </authorList>
    </citation>
    <scope>DEVELOPMENTAL STAGE</scope>
</reference>
<reference key="15">
    <citation type="journal article" date="2016" name="Science">
        <title>The TopoVIB-Like protein family is required for meiotic DNA double-strand break formation.</title>
        <authorList>
            <person name="Robert T."/>
            <person name="Nore A."/>
            <person name="Brun C."/>
            <person name="Maffre C."/>
            <person name="Crimi B."/>
            <person name="Bourbon H.M."/>
            <person name="de Massy B."/>
        </authorList>
    </citation>
    <scope>IDENTIFICATION</scope>
</reference>